<organism>
    <name type="scientific">Serratia proteamaculans (strain 568)</name>
    <dbReference type="NCBI Taxonomy" id="399741"/>
    <lineage>
        <taxon>Bacteria</taxon>
        <taxon>Pseudomonadati</taxon>
        <taxon>Pseudomonadota</taxon>
        <taxon>Gammaproteobacteria</taxon>
        <taxon>Enterobacterales</taxon>
        <taxon>Yersiniaceae</taxon>
        <taxon>Serratia</taxon>
    </lineage>
</organism>
<reference key="1">
    <citation type="submission" date="2007-09" db="EMBL/GenBank/DDBJ databases">
        <title>Complete sequence of chromosome of Serratia proteamaculans 568.</title>
        <authorList>
            <consortium name="US DOE Joint Genome Institute"/>
            <person name="Copeland A."/>
            <person name="Lucas S."/>
            <person name="Lapidus A."/>
            <person name="Barry K."/>
            <person name="Glavina del Rio T."/>
            <person name="Dalin E."/>
            <person name="Tice H."/>
            <person name="Pitluck S."/>
            <person name="Chain P."/>
            <person name="Malfatti S."/>
            <person name="Shin M."/>
            <person name="Vergez L."/>
            <person name="Schmutz J."/>
            <person name="Larimer F."/>
            <person name="Land M."/>
            <person name="Hauser L."/>
            <person name="Kyrpides N."/>
            <person name="Kim E."/>
            <person name="Taghavi S."/>
            <person name="Newman L."/>
            <person name="Vangronsveld J."/>
            <person name="van der Lelie D."/>
            <person name="Richardson P."/>
        </authorList>
    </citation>
    <scope>NUCLEOTIDE SEQUENCE [LARGE SCALE GENOMIC DNA]</scope>
    <source>
        <strain>568</strain>
    </source>
</reference>
<dbReference type="EC" id="4.1.1.11" evidence="1"/>
<dbReference type="EMBL" id="CP000826">
    <property type="protein sequence ID" value="ABV43088.1"/>
    <property type="molecule type" value="Genomic_DNA"/>
</dbReference>
<dbReference type="SMR" id="A8GIZ8"/>
<dbReference type="STRING" id="399741.Spro_3993"/>
<dbReference type="KEGG" id="spe:Spro_3993"/>
<dbReference type="eggNOG" id="COG0853">
    <property type="taxonomic scope" value="Bacteria"/>
</dbReference>
<dbReference type="HOGENOM" id="CLU_115305_2_1_6"/>
<dbReference type="OrthoDB" id="9803983at2"/>
<dbReference type="UniPathway" id="UPA00028">
    <property type="reaction ID" value="UER00002"/>
</dbReference>
<dbReference type="GO" id="GO:0005829">
    <property type="term" value="C:cytosol"/>
    <property type="evidence" value="ECO:0007669"/>
    <property type="project" value="TreeGrafter"/>
</dbReference>
<dbReference type="GO" id="GO:0004068">
    <property type="term" value="F:aspartate 1-decarboxylase activity"/>
    <property type="evidence" value="ECO:0007669"/>
    <property type="project" value="UniProtKB-UniRule"/>
</dbReference>
<dbReference type="GO" id="GO:0006523">
    <property type="term" value="P:alanine biosynthetic process"/>
    <property type="evidence" value="ECO:0007669"/>
    <property type="project" value="InterPro"/>
</dbReference>
<dbReference type="GO" id="GO:0015940">
    <property type="term" value="P:pantothenate biosynthetic process"/>
    <property type="evidence" value="ECO:0007669"/>
    <property type="project" value="UniProtKB-UniRule"/>
</dbReference>
<dbReference type="CDD" id="cd06919">
    <property type="entry name" value="Asp_decarbox"/>
    <property type="match status" value="1"/>
</dbReference>
<dbReference type="FunFam" id="2.40.40.20:FF:000004">
    <property type="entry name" value="Aspartate 1-decarboxylase"/>
    <property type="match status" value="1"/>
</dbReference>
<dbReference type="Gene3D" id="2.40.40.20">
    <property type="match status" value="1"/>
</dbReference>
<dbReference type="HAMAP" id="MF_00446">
    <property type="entry name" value="PanD"/>
    <property type="match status" value="1"/>
</dbReference>
<dbReference type="InterPro" id="IPR009010">
    <property type="entry name" value="Asp_de-COase-like_dom_sf"/>
</dbReference>
<dbReference type="InterPro" id="IPR003190">
    <property type="entry name" value="Asp_decarbox"/>
</dbReference>
<dbReference type="NCBIfam" id="TIGR00223">
    <property type="entry name" value="panD"/>
    <property type="match status" value="1"/>
</dbReference>
<dbReference type="PANTHER" id="PTHR21012">
    <property type="entry name" value="ASPARTATE 1-DECARBOXYLASE"/>
    <property type="match status" value="1"/>
</dbReference>
<dbReference type="PANTHER" id="PTHR21012:SF0">
    <property type="entry name" value="ASPARTATE 1-DECARBOXYLASE"/>
    <property type="match status" value="1"/>
</dbReference>
<dbReference type="Pfam" id="PF02261">
    <property type="entry name" value="Asp_decarbox"/>
    <property type="match status" value="1"/>
</dbReference>
<dbReference type="PIRSF" id="PIRSF006246">
    <property type="entry name" value="Asp_decarbox"/>
    <property type="match status" value="1"/>
</dbReference>
<dbReference type="SUPFAM" id="SSF50692">
    <property type="entry name" value="ADC-like"/>
    <property type="match status" value="1"/>
</dbReference>
<accession>A8GIZ8</accession>
<proteinExistence type="inferred from homology"/>
<sequence>MIRTMLQGKLHRVKVTQADLHYEGSCAIDQDFLEAAGILEYEAIDIYNVDNGQRFSTYAIAAERGSRIISVNGAAARCACVGDKLIICSYVQMSDADARQHRPKVGYFEGDNHLQRKAKAVPVQVA</sequence>
<name>PAND_SERP5</name>
<keyword id="KW-0068">Autocatalytic cleavage</keyword>
<keyword id="KW-0963">Cytoplasm</keyword>
<keyword id="KW-0210">Decarboxylase</keyword>
<keyword id="KW-0456">Lyase</keyword>
<keyword id="KW-0566">Pantothenate biosynthesis</keyword>
<keyword id="KW-0670">Pyruvate</keyword>
<keyword id="KW-0704">Schiff base</keyword>
<keyword id="KW-0865">Zymogen</keyword>
<evidence type="ECO:0000255" key="1">
    <source>
        <dbReference type="HAMAP-Rule" id="MF_00446"/>
    </source>
</evidence>
<protein>
    <recommendedName>
        <fullName evidence="1">Aspartate 1-decarboxylase</fullName>
        <ecNumber evidence="1">4.1.1.11</ecNumber>
    </recommendedName>
    <alternativeName>
        <fullName evidence="1">Aspartate alpha-decarboxylase</fullName>
    </alternativeName>
    <component>
        <recommendedName>
            <fullName evidence="1">Aspartate 1-decarboxylase beta chain</fullName>
        </recommendedName>
    </component>
    <component>
        <recommendedName>
            <fullName evidence="1">Aspartate 1-decarboxylase alpha chain</fullName>
        </recommendedName>
    </component>
</protein>
<feature type="chain" id="PRO_1000060274" description="Aspartate 1-decarboxylase beta chain" evidence="1">
    <location>
        <begin position="1"/>
        <end position="24"/>
    </location>
</feature>
<feature type="chain" id="PRO_1000060275" description="Aspartate 1-decarboxylase alpha chain" evidence="1">
    <location>
        <begin position="25"/>
        <end position="126"/>
    </location>
</feature>
<feature type="active site" description="Schiff-base intermediate with substrate; via pyruvic acid" evidence="1">
    <location>
        <position position="25"/>
    </location>
</feature>
<feature type="active site" description="Proton donor" evidence="1">
    <location>
        <position position="58"/>
    </location>
</feature>
<feature type="binding site" evidence="1">
    <location>
        <position position="57"/>
    </location>
    <ligand>
        <name>substrate</name>
    </ligand>
</feature>
<feature type="binding site" evidence="1">
    <location>
        <begin position="73"/>
        <end position="75"/>
    </location>
    <ligand>
        <name>substrate</name>
    </ligand>
</feature>
<feature type="modified residue" description="Pyruvic acid (Ser)" evidence="1">
    <location>
        <position position="25"/>
    </location>
</feature>
<gene>
    <name evidence="1" type="primary">panD</name>
    <name type="ordered locus">Spro_3993</name>
</gene>
<comment type="function">
    <text evidence="1">Catalyzes the pyruvoyl-dependent decarboxylation of aspartate to produce beta-alanine.</text>
</comment>
<comment type="catalytic activity">
    <reaction evidence="1">
        <text>L-aspartate + H(+) = beta-alanine + CO2</text>
        <dbReference type="Rhea" id="RHEA:19497"/>
        <dbReference type="ChEBI" id="CHEBI:15378"/>
        <dbReference type="ChEBI" id="CHEBI:16526"/>
        <dbReference type="ChEBI" id="CHEBI:29991"/>
        <dbReference type="ChEBI" id="CHEBI:57966"/>
        <dbReference type="EC" id="4.1.1.11"/>
    </reaction>
</comment>
<comment type="cofactor">
    <cofactor evidence="1">
        <name>pyruvate</name>
        <dbReference type="ChEBI" id="CHEBI:15361"/>
    </cofactor>
    <text evidence="1">Binds 1 pyruvoyl group covalently per subunit.</text>
</comment>
<comment type="pathway">
    <text evidence="1">Cofactor biosynthesis; (R)-pantothenate biosynthesis; beta-alanine from L-aspartate: step 1/1.</text>
</comment>
<comment type="subunit">
    <text evidence="1">Heterooctamer of four alpha and four beta subunits.</text>
</comment>
<comment type="subcellular location">
    <subcellularLocation>
        <location evidence="1">Cytoplasm</location>
    </subcellularLocation>
</comment>
<comment type="PTM">
    <text evidence="1">Is synthesized initially as an inactive proenzyme, which is activated by self-cleavage at a specific serine bond to produce a beta-subunit with a hydroxyl group at its C-terminus and an alpha-subunit with a pyruvoyl group at its N-terminus.</text>
</comment>
<comment type="similarity">
    <text evidence="1">Belongs to the PanD family.</text>
</comment>